<evidence type="ECO:0000250" key="1">
    <source>
        <dbReference type="UniProtKB" id="P32775"/>
    </source>
</evidence>
<evidence type="ECO:0000250" key="2">
    <source>
        <dbReference type="UniProtKB" id="Q04446"/>
    </source>
</evidence>
<evidence type="ECO:0000250" key="3">
    <source>
        <dbReference type="UniProtKB" id="Q6FJV0"/>
    </source>
</evidence>
<evidence type="ECO:0000305" key="4"/>
<dbReference type="EC" id="2.4.1.18" evidence="2"/>
<dbReference type="EMBL" id="AF503447">
    <property type="protein sequence ID" value="AAM33305.1"/>
    <property type="status" value="ALT_FRAME"/>
    <property type="molecule type" value="mRNA"/>
</dbReference>
<dbReference type="EMBL" id="AUPC02000041">
    <property type="protein sequence ID" value="POG77302.1"/>
    <property type="molecule type" value="Genomic_DNA"/>
</dbReference>
<dbReference type="SMR" id="Q8NKE1"/>
<dbReference type="CAZy" id="CBM48">
    <property type="family name" value="Carbohydrate-Binding Module Family 48"/>
</dbReference>
<dbReference type="CAZy" id="GH13">
    <property type="family name" value="Glycoside Hydrolase Family 13"/>
</dbReference>
<dbReference type="VEuPathDB" id="FungiDB:RhiirFUN_000633"/>
<dbReference type="eggNOG" id="KOG0470">
    <property type="taxonomic scope" value="Eukaryota"/>
</dbReference>
<dbReference type="HOGENOM" id="CLU_011131_2_2_1"/>
<dbReference type="UniPathway" id="UPA00164"/>
<dbReference type="Proteomes" id="UP000018888">
    <property type="component" value="Unassembled WGS sequence"/>
</dbReference>
<dbReference type="GO" id="GO:0005737">
    <property type="term" value="C:cytoplasm"/>
    <property type="evidence" value="ECO:0000250"/>
    <property type="project" value="UniProtKB"/>
</dbReference>
<dbReference type="GO" id="GO:0003844">
    <property type="term" value="F:1,4-alpha-glucan branching enzyme activity"/>
    <property type="evidence" value="ECO:0007669"/>
    <property type="project" value="UniProtKB-EC"/>
</dbReference>
<dbReference type="GO" id="GO:0043169">
    <property type="term" value="F:cation binding"/>
    <property type="evidence" value="ECO:0007669"/>
    <property type="project" value="InterPro"/>
</dbReference>
<dbReference type="GO" id="GO:0004553">
    <property type="term" value="F:hydrolase activity, hydrolyzing O-glycosyl compounds"/>
    <property type="evidence" value="ECO:0007669"/>
    <property type="project" value="InterPro"/>
</dbReference>
<dbReference type="GO" id="GO:0005978">
    <property type="term" value="P:glycogen biosynthetic process"/>
    <property type="evidence" value="ECO:0007669"/>
    <property type="project" value="UniProtKB-UniPathway"/>
</dbReference>
<dbReference type="CDD" id="cd11321">
    <property type="entry name" value="AmyAc_bac_euk_BE"/>
    <property type="match status" value="1"/>
</dbReference>
<dbReference type="CDD" id="cd02854">
    <property type="entry name" value="E_set_GBE_euk_N"/>
    <property type="match status" value="1"/>
</dbReference>
<dbReference type="FunFam" id="3.20.20.80:FF:000001">
    <property type="entry name" value="1,4-alpha-glucan branching enzyme"/>
    <property type="match status" value="1"/>
</dbReference>
<dbReference type="FunFam" id="2.60.40.10:FF:000250">
    <property type="entry name" value="1,4-alpha-glucan-branching enzyme, chloroplastic/amyloplastic"/>
    <property type="match status" value="1"/>
</dbReference>
<dbReference type="FunFam" id="2.60.40.1180:FF:000003">
    <property type="entry name" value="1,4-alpha-glucan-branching enzyme, chloroplastic/amyloplastic"/>
    <property type="match status" value="1"/>
</dbReference>
<dbReference type="Gene3D" id="3.20.20.80">
    <property type="entry name" value="Glycosidases"/>
    <property type="match status" value="1"/>
</dbReference>
<dbReference type="Gene3D" id="2.60.40.1180">
    <property type="entry name" value="Golgi alpha-mannosidase II"/>
    <property type="match status" value="1"/>
</dbReference>
<dbReference type="Gene3D" id="2.60.40.10">
    <property type="entry name" value="Immunoglobulins"/>
    <property type="match status" value="1"/>
</dbReference>
<dbReference type="InterPro" id="IPR006048">
    <property type="entry name" value="A-amylase/branching_C"/>
</dbReference>
<dbReference type="InterPro" id="IPR037439">
    <property type="entry name" value="Branching_enzy"/>
</dbReference>
<dbReference type="InterPro" id="IPR006047">
    <property type="entry name" value="Glyco_hydro_13_cat_dom"/>
</dbReference>
<dbReference type="InterPro" id="IPR004193">
    <property type="entry name" value="Glyco_hydro_13_N"/>
</dbReference>
<dbReference type="InterPro" id="IPR013780">
    <property type="entry name" value="Glyco_hydro_b"/>
</dbReference>
<dbReference type="InterPro" id="IPR017853">
    <property type="entry name" value="Glycoside_hydrolase_SF"/>
</dbReference>
<dbReference type="InterPro" id="IPR013783">
    <property type="entry name" value="Ig-like_fold"/>
</dbReference>
<dbReference type="InterPro" id="IPR014756">
    <property type="entry name" value="Ig_E-set"/>
</dbReference>
<dbReference type="PANTHER" id="PTHR43651">
    <property type="entry name" value="1,4-ALPHA-GLUCAN-BRANCHING ENZYME"/>
    <property type="match status" value="1"/>
</dbReference>
<dbReference type="PANTHER" id="PTHR43651:SF3">
    <property type="entry name" value="1,4-ALPHA-GLUCAN-BRANCHING ENZYME"/>
    <property type="match status" value="1"/>
</dbReference>
<dbReference type="Pfam" id="PF00128">
    <property type="entry name" value="Alpha-amylase"/>
    <property type="match status" value="1"/>
</dbReference>
<dbReference type="Pfam" id="PF02806">
    <property type="entry name" value="Alpha-amylase_C"/>
    <property type="match status" value="1"/>
</dbReference>
<dbReference type="Pfam" id="PF02922">
    <property type="entry name" value="CBM_48"/>
    <property type="match status" value="1"/>
</dbReference>
<dbReference type="PIRSF" id="PIRSF000463">
    <property type="entry name" value="GlgB"/>
    <property type="match status" value="1"/>
</dbReference>
<dbReference type="SMART" id="SM00642">
    <property type="entry name" value="Aamy"/>
    <property type="match status" value="1"/>
</dbReference>
<dbReference type="SUPFAM" id="SSF51445">
    <property type="entry name" value="(Trans)glycosidases"/>
    <property type="match status" value="1"/>
</dbReference>
<dbReference type="SUPFAM" id="SSF81296">
    <property type="entry name" value="E set domains"/>
    <property type="match status" value="1"/>
</dbReference>
<dbReference type="SUPFAM" id="SSF51011">
    <property type="entry name" value="Glycosyl hydrolase domain"/>
    <property type="match status" value="1"/>
</dbReference>
<comment type="function">
    <text evidence="2">Glycogen-branching enzyme participates in the glycogen biosynthetic process along with glycogenin and glycogen synthase. Generates alpha-1,6-glucosidic branches from alpha-1,4-linked glucose chains, to increase solubility of the glycogen polymer.</text>
</comment>
<comment type="catalytic activity">
    <reaction evidence="2">
        <text>Transfers a segment of a (1-&gt;4)-alpha-D-glucan chain to a primary hydroxy group in a similar glucan chain.</text>
        <dbReference type="EC" id="2.4.1.18"/>
    </reaction>
</comment>
<comment type="pathway">
    <text evidence="2">Glycan biosynthesis; glycogen biosynthesis.</text>
</comment>
<comment type="subcellular location">
    <subcellularLocation>
        <location evidence="1">Cytoplasm</location>
    </subcellularLocation>
    <text evidence="1">Localizes to glycogen granules in the cytoplasm.</text>
</comment>
<comment type="similarity">
    <text evidence="4">Belongs to the glycosyl hydrolase 13 family. GlgB subfamily.</text>
</comment>
<comment type="sequence caution" evidence="4">
    <conflict type="frameshift">
        <sequence resource="EMBL-CDS" id="AAM33305"/>
    </conflict>
</comment>
<name>GLGB_RHIID</name>
<sequence>MSPTEMISQENYEPGICKIDPWLKPFAPAIKRRLESYKKWVKEINQNEGGYDKFSRGYERFGLNVLPNGDIIYREWAPNAVAASLIGEFNDWDRSKHPMKKDSFGVWEVHIPAKNGIPTIPHNTKIKISMTTPEGECIDRLPAWIKRVTQDLNVSLAYDAIFWNPPQKYQWKNNSPKKPTSLRIYEAHVGISTNEGRVGTYNEFTDNVLKRIKDLGYNAIQLMAIMEHAYYASFGYQVTSFFGVSSRYGTPEELMRLIDTAHGMGLYVLLDVVHSHACKNVLDGLNMFDGSDHCYFHEGGKGRHDLWDSRLFNYGHWEVLRFLLSNLRFFMEEYRFDGFRFDGVTSMMYHHHGIGTGFSGGYHEYFGDTVDEGGVVYLMLANDMLHKLYPRIITVSEDVSGMPGLCLPVEEGGIGFDYRLAMAIPDMWIKLLKEQRDDDWDMGNICWTLTNRRHMEKTIAYAESHDQALVGDKTLAFWLMDKEMYTHMSDMTPLTPIIDRGLALHKMIRLLTHGLGGEGYLNFEGNEFGHPEWLDFPRAGNNNSFHYARRQWNVVDDDLLRYKYLNEFDKAMQHLEEQYGWLSSPQAYISLKHNENKLVAFERGNLLWIFNFHPTQSFADYKIGTEWAGKYSIALNTDRKIFGGHDRIDESISYHSQPHEWDGRKNYIQVYIPCRVALVLSHC</sequence>
<keyword id="KW-0963">Cytoplasm</keyword>
<keyword id="KW-0320">Glycogen biosynthesis</keyword>
<keyword id="KW-0328">Glycosyltransferase</keyword>
<keyword id="KW-1185">Reference proteome</keyword>
<keyword id="KW-0808">Transferase</keyword>
<reference key="1">
    <citation type="journal article" date="2003" name="Plant Physiol.">
        <title>Carbon export from arbuscular mycorrhizal roots involves the translocation of carbohydrate as well as lipid.</title>
        <authorList>
            <person name="Bago B."/>
            <person name="Pfeffer P.E."/>
            <person name="Abubaker J."/>
            <person name="Jun J."/>
            <person name="Allen J.W."/>
            <person name="Brouillette J."/>
            <person name="Douds D.D."/>
            <person name="Lammers P.J."/>
            <person name="Shachar-Hill Y."/>
        </authorList>
    </citation>
    <scope>NUCLEOTIDE SEQUENCE [MRNA]</scope>
    <source>
        <strain>DAOM 181602 / DAOM 197198 / MUCL 43194</strain>
    </source>
</reference>
<reference key="2">
    <citation type="journal article" date="2013" name="Proc. Natl. Acad. Sci. U.S.A.">
        <title>Genome of an arbuscular mycorrhizal fungus provides insight into the oldest plant symbiosis.</title>
        <authorList>
            <person name="Tisserant E."/>
            <person name="Malbreil M."/>
            <person name="Kuo A."/>
            <person name="Kohler A."/>
            <person name="Symeonidi A."/>
            <person name="Balestrini R."/>
            <person name="Charron P."/>
            <person name="Duensing N."/>
            <person name="Frei dit Frey N."/>
            <person name="Gianinazzi-Pearson V."/>
            <person name="Gilbert L.B."/>
            <person name="Handa Y."/>
            <person name="Herr J.R."/>
            <person name="Hijri M."/>
            <person name="Koul R."/>
            <person name="Kawaguchi M."/>
            <person name="Krajinski F."/>
            <person name="Lammers P.J."/>
            <person name="Masclaux F.G."/>
            <person name="Murat C."/>
            <person name="Morin E."/>
            <person name="Ndikumana S."/>
            <person name="Pagni M."/>
            <person name="Petitpierre D."/>
            <person name="Requena N."/>
            <person name="Rosikiewicz P."/>
            <person name="Riley R."/>
            <person name="Saito K."/>
            <person name="San Clemente H."/>
            <person name="Shapiro H."/>
            <person name="van Tuinen D."/>
            <person name="Becard G."/>
            <person name="Bonfante P."/>
            <person name="Paszkowski U."/>
            <person name="Shachar-Hill Y.Y."/>
            <person name="Tuskan G.A."/>
            <person name="Young J.P.W."/>
            <person name="Sanders I.R."/>
            <person name="Henrissat B."/>
            <person name="Rensing S.A."/>
            <person name="Grigoriev I.V."/>
            <person name="Corradi N."/>
            <person name="Roux C."/>
            <person name="Martin F."/>
        </authorList>
    </citation>
    <scope>NUCLEOTIDE SEQUENCE [LARGE SCALE GENOMIC DNA] OF 24-683</scope>
    <source>
        <strain>DAOM 181602 / DAOM 197198 / MUCL 43194</strain>
    </source>
</reference>
<reference key="3">
    <citation type="journal article" date="2018" name="New Phytol.">
        <title>High intraspecific genome diversity in the model arbuscular mycorrhizal symbiont Rhizophagus irregularis.</title>
        <authorList>
            <person name="Chen E.C.H."/>
            <person name="Morin E."/>
            <person name="Beaudet D."/>
            <person name="Noel J."/>
            <person name="Yildirir G."/>
            <person name="Ndikumana S."/>
            <person name="Charron P."/>
            <person name="St-Onge C."/>
            <person name="Giorgi J."/>
            <person name="Krueger M."/>
            <person name="Marton T."/>
            <person name="Ropars J."/>
            <person name="Grigoriev I.V."/>
            <person name="Hainaut M."/>
            <person name="Henrissat B."/>
            <person name="Roux C."/>
            <person name="Martin F."/>
            <person name="Corradi N."/>
        </authorList>
    </citation>
    <scope>NUCLEOTIDE SEQUENCE [LARGE SCALE GENOMIC DNA]</scope>
    <scope>GENOME REANNOTATION</scope>
    <source>
        <strain>DAOM 181602 / DAOM 197198 / MUCL 43194</strain>
    </source>
</reference>
<protein>
    <recommendedName>
        <fullName>1,4-alpha-glucan-branching enzyme</fullName>
        <ecNumber evidence="2">2.4.1.18</ecNumber>
    </recommendedName>
    <alternativeName>
        <fullName>Glycogen-branching enzyme</fullName>
    </alternativeName>
</protein>
<gene>
    <name type="primary">GLC3</name>
    <name type="ORF">GLOIN_2v1817213</name>
    <name type="ORF">GLOINDRAFT_70859</name>
</gene>
<accession>Q8NKE1</accession>
<accession>A0A2P4QI39</accession>
<accession>U9SPI3</accession>
<proteinExistence type="evidence at transcript level"/>
<organism>
    <name type="scientific">Rhizophagus irregularis (strain DAOM 181602 / DAOM 197198 / MUCL 43194)</name>
    <name type="common">Arbuscular mycorrhizal fungus</name>
    <name type="synonym">Glomus intraradices</name>
    <dbReference type="NCBI Taxonomy" id="747089"/>
    <lineage>
        <taxon>Eukaryota</taxon>
        <taxon>Fungi</taxon>
        <taxon>Fungi incertae sedis</taxon>
        <taxon>Mucoromycota</taxon>
        <taxon>Glomeromycotina</taxon>
        <taxon>Glomeromycetes</taxon>
        <taxon>Glomerales</taxon>
        <taxon>Glomeraceae</taxon>
        <taxon>Rhizophagus</taxon>
    </lineage>
</organism>
<feature type="chain" id="PRO_0000188783" description="1,4-alpha-glucan-branching enzyme">
    <location>
        <begin position="1"/>
        <end position="683"/>
    </location>
</feature>
<feature type="active site" description="Nucleophile" evidence="2">
    <location>
        <position position="342"/>
    </location>
</feature>
<feature type="active site" description="Proton donor" evidence="2">
    <location>
        <position position="397"/>
    </location>
</feature>
<feature type="binding site" evidence="3">
    <location>
        <position position="92"/>
    </location>
    <ligand>
        <name>(1,4-alpha-D-glucosyl)n</name>
        <dbReference type="ChEBI" id="CHEBI:15444"/>
    </ligand>
</feature>
<feature type="binding site" evidence="3">
    <location>
        <position position="127"/>
    </location>
    <ligand>
        <name>(1,4-alpha-D-glucosyl)n</name>
        <dbReference type="ChEBI" id="CHEBI:15444"/>
    </ligand>
</feature>
<feature type="site" description="Transition state stabilizer" evidence="2">
    <location>
        <position position="466"/>
    </location>
</feature>
<feature type="sequence conflict" description="In Ref. 1; AAM33305." evidence="4" ref="1">
    <original>TLAFWLMDKE</original>
    <variation>NTCLLVNGQG</variation>
    <location>
        <begin position="474"/>
        <end position="483"/>
    </location>
</feature>
<feature type="sequence conflict" description="In Ref. 1; AAM33305." evidence="4" ref="1">
    <original>H</original>
    <variation>L</variation>
    <location>
        <position position="613"/>
    </location>
</feature>
<feature type="sequence conflict" description="In Ref. 1; AAM33305." evidence="4" ref="1">
    <original>L</original>
    <variation>P</variation>
    <location>
        <position position="678"/>
    </location>
</feature>